<proteinExistence type="inferred from homology"/>
<name>CTAA_BACCZ</name>
<evidence type="ECO:0000255" key="1">
    <source>
        <dbReference type="HAMAP-Rule" id="MF_01664"/>
    </source>
</evidence>
<comment type="function">
    <text evidence="1">Catalyzes the conversion of heme O to heme A by two successive hydroxylations of the methyl group at C8. The first hydroxylation forms heme I, the second hydroxylation results in an unstable dihydroxymethyl group, which spontaneously dehydrates, resulting in the formyl group of heme A.</text>
</comment>
<comment type="catalytic activity">
    <reaction evidence="1">
        <text>Fe(II)-heme o + 2 A + H2O = Fe(II)-heme a + 2 AH2</text>
        <dbReference type="Rhea" id="RHEA:63388"/>
        <dbReference type="ChEBI" id="CHEBI:13193"/>
        <dbReference type="ChEBI" id="CHEBI:15377"/>
        <dbReference type="ChEBI" id="CHEBI:17499"/>
        <dbReference type="ChEBI" id="CHEBI:60530"/>
        <dbReference type="ChEBI" id="CHEBI:61715"/>
        <dbReference type="EC" id="1.17.99.9"/>
    </reaction>
    <physiologicalReaction direction="left-to-right" evidence="1">
        <dbReference type="Rhea" id="RHEA:63389"/>
    </physiologicalReaction>
</comment>
<comment type="cofactor">
    <cofactor evidence="1">
        <name>heme b</name>
        <dbReference type="ChEBI" id="CHEBI:60344"/>
    </cofactor>
</comment>
<comment type="pathway">
    <text evidence="1">Porphyrin-containing compound metabolism; heme A biosynthesis; heme A from heme O: step 1/1.</text>
</comment>
<comment type="subunit">
    <text evidence="1">Interacts with CtaB.</text>
</comment>
<comment type="subcellular location">
    <subcellularLocation>
        <location evidence="1">Cell membrane</location>
        <topology evidence="1">Multi-pass membrane protein</topology>
    </subcellularLocation>
</comment>
<comment type="domain">
    <text evidence="1">The N-half (TM1-TM4) and C-half (TM5-TM8) domains are connected by an intracellular loop. Each domain is formed from four-helix bundles and they align in a pseudo twofold symmetry manner. The N-half domain is the substrate-heme O binding domain and the C-half domain is the cofactor heme B binding domain.</text>
</comment>
<comment type="domain">
    <text evidence="1">The cysteines of disulfide bond Cys-35 and Cys-42 may be involved in transfer of reducing equivalents from quinol in the membrane to the active site of the enzyme.</text>
</comment>
<comment type="similarity">
    <text evidence="1">Belongs to the COX15/CtaA family. Type 1 subfamily.</text>
</comment>
<accession>Q635Y0</accession>
<gene>
    <name evidence="1" type="primary">ctaA</name>
    <name type="ordered locus">BCE33L3706</name>
</gene>
<protein>
    <recommendedName>
        <fullName evidence="1">Heme A synthase</fullName>
        <shortName evidence="1">HAS</shortName>
        <ecNumber evidence="1">1.17.99.9</ecNumber>
    </recommendedName>
    <alternativeName>
        <fullName evidence="1">Cytochrome aa3-controlling protein</fullName>
    </alternativeName>
</protein>
<dbReference type="EC" id="1.17.99.9" evidence="1"/>
<dbReference type="EMBL" id="CP000001">
    <property type="protein sequence ID" value="AAU16562.1"/>
    <property type="molecule type" value="Genomic_DNA"/>
</dbReference>
<dbReference type="RefSeq" id="WP_001188730.1">
    <property type="nucleotide sequence ID" value="NZ_CP009968.1"/>
</dbReference>
<dbReference type="SMR" id="Q635Y0"/>
<dbReference type="GeneID" id="45023833"/>
<dbReference type="KEGG" id="bcz:BCE33L3706"/>
<dbReference type="PATRIC" id="fig|288681.22.peg.1706"/>
<dbReference type="UniPathway" id="UPA00269">
    <property type="reaction ID" value="UER00713"/>
</dbReference>
<dbReference type="Proteomes" id="UP000002612">
    <property type="component" value="Chromosome"/>
</dbReference>
<dbReference type="GO" id="GO:0005886">
    <property type="term" value="C:plasma membrane"/>
    <property type="evidence" value="ECO:0007669"/>
    <property type="project" value="UniProtKB-SubCell"/>
</dbReference>
<dbReference type="GO" id="GO:0046872">
    <property type="term" value="F:metal ion binding"/>
    <property type="evidence" value="ECO:0007669"/>
    <property type="project" value="UniProtKB-KW"/>
</dbReference>
<dbReference type="GO" id="GO:0016653">
    <property type="term" value="F:oxidoreductase activity, acting on NAD(P)H, heme protein as acceptor"/>
    <property type="evidence" value="ECO:0007669"/>
    <property type="project" value="InterPro"/>
</dbReference>
<dbReference type="GO" id="GO:0006784">
    <property type="term" value="P:heme A biosynthetic process"/>
    <property type="evidence" value="ECO:0007669"/>
    <property type="project" value="UniProtKB-UniRule"/>
</dbReference>
<dbReference type="HAMAP" id="MF_01664">
    <property type="entry name" value="HemeA_synth_type1"/>
    <property type="match status" value="1"/>
</dbReference>
<dbReference type="InterPro" id="IPR003780">
    <property type="entry name" value="COX15/CtaA_fam"/>
</dbReference>
<dbReference type="InterPro" id="IPR050450">
    <property type="entry name" value="COX15/CtaA_HemeA_synthase"/>
</dbReference>
<dbReference type="InterPro" id="IPR023755">
    <property type="entry name" value="HemeA_Synthase_type1"/>
</dbReference>
<dbReference type="PANTHER" id="PTHR35457">
    <property type="entry name" value="HEME A SYNTHASE"/>
    <property type="match status" value="1"/>
</dbReference>
<dbReference type="PANTHER" id="PTHR35457:SF1">
    <property type="entry name" value="HEME A SYNTHASE"/>
    <property type="match status" value="1"/>
</dbReference>
<dbReference type="Pfam" id="PF02628">
    <property type="entry name" value="COX15-CtaA"/>
    <property type="match status" value="1"/>
</dbReference>
<sequence length="311" mass="34625">MQRFIKWLAVITSLDLLIVLLGGALVTKTGSGQGCGKSWPLCNGEFVPSNLSMETIIELSHRLTSGSAGILVTLLCILSWKYYKHVRETKTLAILSFVFLVAQALMGAAAVVWGQMPAVLAIHFGISLISFASVILLTCLIFEIDQKFDARSLIMDKKMKFHIYGVTIYCYLVVYTGALVRHERASLACPDFPLCSKNRPMPTQLHEWVQMGHRLAAMLIFVWILYAMILAIRHYKQQPVVYWGWIISFILVTLQAIVGILVVFTNASLAMALLHSLFISCLFAVLCYLVMLGTRSKVNAKEAASTSKQTK</sequence>
<feature type="chain" id="PRO_0000348969" description="Heme A synthase">
    <location>
        <begin position="1"/>
        <end position="311"/>
    </location>
</feature>
<feature type="topological domain" description="Cytoplasmic" evidence="1">
    <location>
        <begin position="1"/>
        <end position="6"/>
    </location>
</feature>
<feature type="transmembrane region" description="Helical" evidence="1">
    <location>
        <begin position="7"/>
        <end position="27"/>
    </location>
</feature>
<feature type="topological domain" description="Extracellular" evidence="1">
    <location>
        <begin position="28"/>
        <end position="62"/>
    </location>
</feature>
<feature type="transmembrane region" description="Helical" evidence="1">
    <location>
        <begin position="63"/>
        <end position="83"/>
    </location>
</feature>
<feature type="topological domain" description="Cytoplasmic" evidence="1">
    <location>
        <begin position="84"/>
        <end position="91"/>
    </location>
</feature>
<feature type="transmembrane region" description="Helical" evidence="1">
    <location>
        <begin position="92"/>
        <end position="112"/>
    </location>
</feature>
<feature type="topological domain" description="Extracellular" evidence="1">
    <location>
        <begin position="113"/>
        <end position="121"/>
    </location>
</feature>
<feature type="transmembrane region" description="Helical" evidence="1">
    <location>
        <begin position="122"/>
        <end position="142"/>
    </location>
</feature>
<feature type="topological domain" description="Cytoplasmic" evidence="1">
    <location>
        <begin position="143"/>
        <end position="159"/>
    </location>
</feature>
<feature type="transmembrane region" description="Helical" evidence="1">
    <location>
        <begin position="160"/>
        <end position="180"/>
    </location>
</feature>
<feature type="topological domain" description="Extracellular" evidence="1">
    <location>
        <begin position="181"/>
        <end position="211"/>
    </location>
</feature>
<feature type="transmembrane region" description="Helical" evidence="1">
    <location>
        <begin position="212"/>
        <end position="232"/>
    </location>
</feature>
<feature type="topological domain" description="Cytoplasmic" evidence="1">
    <location>
        <begin position="233"/>
        <end position="243"/>
    </location>
</feature>
<feature type="transmembrane region" description="Helical" evidence="1">
    <location>
        <begin position="244"/>
        <end position="264"/>
    </location>
</feature>
<feature type="topological domain" description="Extracellular" evidence="1">
    <location>
        <begin position="265"/>
        <end position="271"/>
    </location>
</feature>
<feature type="transmembrane region" description="Helical" evidence="1">
    <location>
        <begin position="272"/>
        <end position="292"/>
    </location>
</feature>
<feature type="topological domain" description="Cytoplasmic" evidence="1">
    <location>
        <begin position="293"/>
        <end position="311"/>
    </location>
</feature>
<feature type="active site" evidence="1">
    <location>
        <position position="58"/>
    </location>
</feature>
<feature type="binding site" description="axial binding residue" evidence="1">
    <location>
        <position position="61"/>
    </location>
    <ligand>
        <name>heme o</name>
        <dbReference type="ChEBI" id="CHEBI:24480"/>
    </ligand>
    <ligandPart>
        <name>Fe</name>
        <dbReference type="ChEBI" id="CHEBI:18248"/>
    </ligandPart>
</feature>
<feature type="binding site" description="axial binding residue" evidence="1">
    <location>
        <position position="123"/>
    </location>
    <ligand>
        <name>heme o</name>
        <dbReference type="ChEBI" id="CHEBI:24480"/>
    </ligand>
    <ligandPart>
        <name>Fe</name>
        <dbReference type="ChEBI" id="CHEBI:18248"/>
    </ligandPart>
</feature>
<feature type="binding site" description="axial binding residue" evidence="1">
    <location>
        <position position="213"/>
    </location>
    <ligand>
        <name>heme b</name>
        <dbReference type="ChEBI" id="CHEBI:60344"/>
    </ligand>
    <ligandPart>
        <name>Fe</name>
        <dbReference type="ChEBI" id="CHEBI:18248"/>
    </ligandPart>
</feature>
<feature type="binding site" description="axial binding residue" evidence="1">
    <location>
        <position position="275"/>
    </location>
    <ligand>
        <name>heme b</name>
        <dbReference type="ChEBI" id="CHEBI:60344"/>
    </ligand>
    <ligandPart>
        <name>Fe</name>
        <dbReference type="ChEBI" id="CHEBI:18248"/>
    </ligandPart>
</feature>
<feature type="disulfide bond" description="Essential for catalytic activity" evidence="1">
    <location>
        <begin position="35"/>
        <end position="42"/>
    </location>
</feature>
<feature type="disulfide bond" evidence="1">
    <location>
        <begin position="189"/>
        <end position="195"/>
    </location>
</feature>
<organism>
    <name type="scientific">Bacillus cereus (strain ZK / E33L)</name>
    <dbReference type="NCBI Taxonomy" id="288681"/>
    <lineage>
        <taxon>Bacteria</taxon>
        <taxon>Bacillati</taxon>
        <taxon>Bacillota</taxon>
        <taxon>Bacilli</taxon>
        <taxon>Bacillales</taxon>
        <taxon>Bacillaceae</taxon>
        <taxon>Bacillus</taxon>
        <taxon>Bacillus cereus group</taxon>
    </lineage>
</organism>
<keyword id="KW-1003">Cell membrane</keyword>
<keyword id="KW-1015">Disulfide bond</keyword>
<keyword id="KW-0350">Heme biosynthesis</keyword>
<keyword id="KW-0408">Iron</keyword>
<keyword id="KW-0472">Membrane</keyword>
<keyword id="KW-0479">Metal-binding</keyword>
<keyword id="KW-0560">Oxidoreductase</keyword>
<keyword id="KW-0812">Transmembrane</keyword>
<keyword id="KW-1133">Transmembrane helix</keyword>
<reference key="1">
    <citation type="journal article" date="2006" name="J. Bacteriol.">
        <title>Pathogenomic sequence analysis of Bacillus cereus and Bacillus thuringiensis isolates closely related to Bacillus anthracis.</title>
        <authorList>
            <person name="Han C.S."/>
            <person name="Xie G."/>
            <person name="Challacombe J.F."/>
            <person name="Altherr M.R."/>
            <person name="Bhotika S.S."/>
            <person name="Bruce D."/>
            <person name="Campbell C.S."/>
            <person name="Campbell M.L."/>
            <person name="Chen J."/>
            <person name="Chertkov O."/>
            <person name="Cleland C."/>
            <person name="Dimitrijevic M."/>
            <person name="Doggett N.A."/>
            <person name="Fawcett J.J."/>
            <person name="Glavina T."/>
            <person name="Goodwin L.A."/>
            <person name="Hill K.K."/>
            <person name="Hitchcock P."/>
            <person name="Jackson P.J."/>
            <person name="Keim P."/>
            <person name="Kewalramani A.R."/>
            <person name="Longmire J."/>
            <person name="Lucas S."/>
            <person name="Malfatti S."/>
            <person name="McMurry K."/>
            <person name="Meincke L.J."/>
            <person name="Misra M."/>
            <person name="Moseman B.L."/>
            <person name="Mundt M."/>
            <person name="Munk A.C."/>
            <person name="Okinaka R.T."/>
            <person name="Parson-Quintana B."/>
            <person name="Reilly L.P."/>
            <person name="Richardson P."/>
            <person name="Robinson D.L."/>
            <person name="Rubin E."/>
            <person name="Saunders E."/>
            <person name="Tapia R."/>
            <person name="Tesmer J.G."/>
            <person name="Thayer N."/>
            <person name="Thompson L.S."/>
            <person name="Tice H."/>
            <person name="Ticknor L.O."/>
            <person name="Wills P.L."/>
            <person name="Brettin T.S."/>
            <person name="Gilna P."/>
        </authorList>
    </citation>
    <scope>NUCLEOTIDE SEQUENCE [LARGE SCALE GENOMIC DNA]</scope>
    <source>
        <strain>ZK / E33L</strain>
    </source>
</reference>